<proteinExistence type="evidence at protein level"/>
<keyword id="KW-0012">Acyltransferase</keyword>
<keyword id="KW-1185">Reference proteome</keyword>
<keyword id="KW-0808">Transferase</keyword>
<comment type="function">
    <text evidence="4">Involved in a cysteine salvage pathway from S-alkylcysteine. Catalyzes the first step in this pathway, i.e. the amine acetylation of an S-alkylcysteine with a preference for S-benzyl-L-cysteine over S-methyl-L-cysteine. This pathway is likely important in the catabolism of alkylated cysteine generated by proteolysis of alkylated glutathione formed in the detoxification of a wide range of electrophiles.</text>
</comment>
<comment type="catalytic activity">
    <reaction evidence="4">
        <text>an S-substituted L-cysteine + acetyl-CoA = an N-acetyl-L-cysteine-S-conjugate + CoA + H(+)</text>
        <dbReference type="Rhea" id="RHEA:19213"/>
        <dbReference type="ChEBI" id="CHEBI:15378"/>
        <dbReference type="ChEBI" id="CHEBI:57287"/>
        <dbReference type="ChEBI" id="CHEBI:57288"/>
        <dbReference type="ChEBI" id="CHEBI:58717"/>
        <dbReference type="ChEBI" id="CHEBI:58718"/>
        <dbReference type="EC" id="2.3.1.80"/>
    </reaction>
    <physiologicalReaction direction="left-to-right" evidence="7">
        <dbReference type="Rhea" id="RHEA:19214"/>
    </physiologicalReaction>
</comment>
<comment type="catalytic activity">
    <reaction evidence="4">
        <text>S-benzyl-L-cysteine + acetyl-CoA = N-acetyl-S-benzyl-L-cysteine + CoA + H(+)</text>
        <dbReference type="Rhea" id="RHEA:75511"/>
        <dbReference type="ChEBI" id="CHEBI:15378"/>
        <dbReference type="ChEBI" id="CHEBI:57287"/>
        <dbReference type="ChEBI" id="CHEBI:57288"/>
        <dbReference type="ChEBI" id="CHEBI:145803"/>
        <dbReference type="ChEBI" id="CHEBI:194342"/>
    </reaction>
    <physiologicalReaction direction="left-to-right" evidence="7">
        <dbReference type="Rhea" id="RHEA:75512"/>
    </physiologicalReaction>
</comment>
<comment type="catalytic activity">
    <reaction evidence="4">
        <text>S-methyl-L-cysteine + acetyl-CoA = N-acetyl-S-methyl-L-cysteine + CoA + H(+)</text>
        <dbReference type="Rhea" id="RHEA:75523"/>
        <dbReference type="ChEBI" id="CHEBI:15378"/>
        <dbReference type="ChEBI" id="CHEBI:57287"/>
        <dbReference type="ChEBI" id="CHEBI:57288"/>
        <dbReference type="ChEBI" id="CHEBI:133545"/>
        <dbReference type="ChEBI" id="CHEBI:194347"/>
    </reaction>
    <physiologicalReaction direction="left-to-right" evidence="7">
        <dbReference type="Rhea" id="RHEA:75524"/>
    </physiologicalReaction>
</comment>
<comment type="pathway">
    <text evidence="7">Amino-acid metabolism.</text>
</comment>
<comment type="induction">
    <text evidence="2 3">Induced by glutathione but not sulfate (at protein level). Induced by methionine and taurine. Positively regulated by YtlI under supply of glutathione as sulfur source.</text>
</comment>
<comment type="disruption phenotype">
    <text evidence="2">Growth rate decreased by 4-fold when grown in presence of taurine as sulfur source.</text>
</comment>
<comment type="similarity">
    <text evidence="6">Belongs to the acetyltransferase family.</text>
</comment>
<accession>O34350</accession>
<accession>Q795U5</accession>
<reference key="1">
    <citation type="journal article" date="1997" name="Microbiology">
        <title>Sequencing and functional annotation of the Bacillus subtilis genes in the 200 kb rrnB-dnaB region.</title>
        <authorList>
            <person name="Lapidus A."/>
            <person name="Galleron N."/>
            <person name="Sorokin A."/>
            <person name="Ehrlich S.D."/>
        </authorList>
    </citation>
    <scope>NUCLEOTIDE SEQUENCE [GENOMIC DNA]</scope>
    <source>
        <strain>168</strain>
    </source>
</reference>
<reference key="2">
    <citation type="journal article" date="1997" name="Nature">
        <title>The complete genome sequence of the Gram-positive bacterium Bacillus subtilis.</title>
        <authorList>
            <person name="Kunst F."/>
            <person name="Ogasawara N."/>
            <person name="Moszer I."/>
            <person name="Albertini A.M."/>
            <person name="Alloni G."/>
            <person name="Azevedo V."/>
            <person name="Bertero M.G."/>
            <person name="Bessieres P."/>
            <person name="Bolotin A."/>
            <person name="Borchert S."/>
            <person name="Borriss R."/>
            <person name="Boursier L."/>
            <person name="Brans A."/>
            <person name="Braun M."/>
            <person name="Brignell S.C."/>
            <person name="Bron S."/>
            <person name="Brouillet S."/>
            <person name="Bruschi C.V."/>
            <person name="Caldwell B."/>
            <person name="Capuano V."/>
            <person name="Carter N.M."/>
            <person name="Choi S.-K."/>
            <person name="Codani J.-J."/>
            <person name="Connerton I.F."/>
            <person name="Cummings N.J."/>
            <person name="Daniel R.A."/>
            <person name="Denizot F."/>
            <person name="Devine K.M."/>
            <person name="Duesterhoeft A."/>
            <person name="Ehrlich S.D."/>
            <person name="Emmerson P.T."/>
            <person name="Entian K.-D."/>
            <person name="Errington J."/>
            <person name="Fabret C."/>
            <person name="Ferrari E."/>
            <person name="Foulger D."/>
            <person name="Fritz C."/>
            <person name="Fujita M."/>
            <person name="Fujita Y."/>
            <person name="Fuma S."/>
            <person name="Galizzi A."/>
            <person name="Galleron N."/>
            <person name="Ghim S.-Y."/>
            <person name="Glaser P."/>
            <person name="Goffeau A."/>
            <person name="Golightly E.J."/>
            <person name="Grandi G."/>
            <person name="Guiseppi G."/>
            <person name="Guy B.J."/>
            <person name="Haga K."/>
            <person name="Haiech J."/>
            <person name="Harwood C.R."/>
            <person name="Henaut A."/>
            <person name="Hilbert H."/>
            <person name="Holsappel S."/>
            <person name="Hosono S."/>
            <person name="Hullo M.-F."/>
            <person name="Itaya M."/>
            <person name="Jones L.-M."/>
            <person name="Joris B."/>
            <person name="Karamata D."/>
            <person name="Kasahara Y."/>
            <person name="Klaerr-Blanchard M."/>
            <person name="Klein C."/>
            <person name="Kobayashi Y."/>
            <person name="Koetter P."/>
            <person name="Koningstein G."/>
            <person name="Krogh S."/>
            <person name="Kumano M."/>
            <person name="Kurita K."/>
            <person name="Lapidus A."/>
            <person name="Lardinois S."/>
            <person name="Lauber J."/>
            <person name="Lazarevic V."/>
            <person name="Lee S.-M."/>
            <person name="Levine A."/>
            <person name="Liu H."/>
            <person name="Masuda S."/>
            <person name="Mauel C."/>
            <person name="Medigue C."/>
            <person name="Medina N."/>
            <person name="Mellado R.P."/>
            <person name="Mizuno M."/>
            <person name="Moestl D."/>
            <person name="Nakai S."/>
            <person name="Noback M."/>
            <person name="Noone D."/>
            <person name="O'Reilly M."/>
            <person name="Ogawa K."/>
            <person name="Ogiwara A."/>
            <person name="Oudega B."/>
            <person name="Park S.-H."/>
            <person name="Parro V."/>
            <person name="Pohl T.M."/>
            <person name="Portetelle D."/>
            <person name="Porwollik S."/>
            <person name="Prescott A.M."/>
            <person name="Presecan E."/>
            <person name="Pujic P."/>
            <person name="Purnelle B."/>
            <person name="Rapoport G."/>
            <person name="Rey M."/>
            <person name="Reynolds S."/>
            <person name="Rieger M."/>
            <person name="Rivolta C."/>
            <person name="Rocha E."/>
            <person name="Roche B."/>
            <person name="Rose M."/>
            <person name="Sadaie Y."/>
            <person name="Sato T."/>
            <person name="Scanlan E."/>
            <person name="Schleich S."/>
            <person name="Schroeter R."/>
            <person name="Scoffone F."/>
            <person name="Sekiguchi J."/>
            <person name="Sekowska A."/>
            <person name="Seror S.J."/>
            <person name="Serror P."/>
            <person name="Shin B.-S."/>
            <person name="Soldo B."/>
            <person name="Sorokin A."/>
            <person name="Tacconi E."/>
            <person name="Takagi T."/>
            <person name="Takahashi H."/>
            <person name="Takemaru K."/>
            <person name="Takeuchi M."/>
            <person name="Tamakoshi A."/>
            <person name="Tanaka T."/>
            <person name="Terpstra P."/>
            <person name="Tognoni A."/>
            <person name="Tosato V."/>
            <person name="Uchiyama S."/>
            <person name="Vandenbol M."/>
            <person name="Vannier F."/>
            <person name="Vassarotti A."/>
            <person name="Viari A."/>
            <person name="Wambutt R."/>
            <person name="Wedler E."/>
            <person name="Wedler H."/>
            <person name="Weitzenegger T."/>
            <person name="Winters P."/>
            <person name="Wipat A."/>
            <person name="Yamamoto H."/>
            <person name="Yamane K."/>
            <person name="Yasumoto K."/>
            <person name="Yata K."/>
            <person name="Yoshida K."/>
            <person name="Yoshikawa H.-F."/>
            <person name="Zumstein E."/>
            <person name="Yoshikawa H."/>
            <person name="Danchin A."/>
        </authorList>
    </citation>
    <scope>NUCLEOTIDE SEQUENCE [LARGE SCALE GENOMIC DNA]</scope>
    <source>
        <strain>168</strain>
    </source>
</reference>
<reference key="3">
    <citation type="journal article" date="2001" name="Microbiology">
        <title>Sulfur-limitation-regulated proteins in Bacillus subtilis: a two-dimensional gel electrophoresis study.</title>
        <authorList>
            <person name="Coppee J.Y."/>
            <person name="Auger S."/>
            <person name="Turlin E."/>
            <person name="Sekowska A."/>
            <person name="Le Caer J.-P."/>
            <person name="Labas V."/>
            <person name="Vagner V."/>
            <person name="Danchin A."/>
            <person name="Martin-Verstraete I."/>
        </authorList>
    </citation>
    <scope>INDUCTION</scope>
    <scope>DISRUPTION PHENOTYPE</scope>
</reference>
<reference key="4">
    <citation type="journal article" date="2005" name="J. Bacteriol.">
        <title>Regulation of the Bacillus subtilis ytmI operon, involved in sulfur metabolism.</title>
        <authorList>
            <person name="Burguiere P."/>
            <person name="Fert J."/>
            <person name="Guillouard I."/>
            <person name="Auger S."/>
            <person name="Danchin A."/>
            <person name="Martin-Verstraete I."/>
        </authorList>
    </citation>
    <scope>INDUCTION</scope>
</reference>
<reference key="5">
    <citation type="journal article" date="2022" name="Biochemistry">
        <title>Cysteine Dealkylation in Bacillus subtilis by a Novel Flavin-Dependent Monooxygenase.</title>
        <authorList>
            <person name="Hazra S."/>
            <person name="Bhandari D.M."/>
            <person name="Krishnamoorthy K."/>
            <person name="Sekowska A."/>
            <person name="Danchin A."/>
            <person name="Begley T.P."/>
        </authorList>
    </citation>
    <scope>FUNCTION</scope>
    <scope>CATALYTIC ACTIVITY</scope>
    <scope>PATHWAY</scope>
</reference>
<dbReference type="EC" id="2.3.1.80" evidence="4"/>
<dbReference type="EMBL" id="AF008220">
    <property type="protein sequence ID" value="AAC00324.1"/>
    <property type="molecule type" value="Genomic_DNA"/>
</dbReference>
<dbReference type="EMBL" id="AL009126">
    <property type="protein sequence ID" value="CAB14899.1"/>
    <property type="molecule type" value="Genomic_DNA"/>
</dbReference>
<dbReference type="PIR" id="C69996">
    <property type="entry name" value="C69996"/>
</dbReference>
<dbReference type="RefSeq" id="NP_390817.1">
    <property type="nucleotide sequence ID" value="NC_000964.3"/>
</dbReference>
<dbReference type="RefSeq" id="WP_003245971.1">
    <property type="nucleotide sequence ID" value="NZ_OZ025638.1"/>
</dbReference>
<dbReference type="SMR" id="O34350"/>
<dbReference type="FunCoup" id="O34350">
    <property type="interactions" value="9"/>
</dbReference>
<dbReference type="STRING" id="224308.BSU29390"/>
<dbReference type="PaxDb" id="224308-BSU29390"/>
<dbReference type="EnsemblBacteria" id="CAB14899">
    <property type="protein sequence ID" value="CAB14899"/>
    <property type="gene ID" value="BSU_29390"/>
</dbReference>
<dbReference type="GeneID" id="937353"/>
<dbReference type="KEGG" id="bsu:BSU29390"/>
<dbReference type="PATRIC" id="fig|224308.179.peg.3193"/>
<dbReference type="eggNOG" id="COG0454">
    <property type="taxonomic scope" value="Bacteria"/>
</dbReference>
<dbReference type="InParanoid" id="O34350"/>
<dbReference type="OrthoDB" id="8116329at2"/>
<dbReference type="PhylomeDB" id="O34350"/>
<dbReference type="BioCyc" id="BSUB:BSU29390-MONOMER"/>
<dbReference type="BioCyc" id="MetaCyc:BSU29390-MONOMER"/>
<dbReference type="Proteomes" id="UP000001570">
    <property type="component" value="Chromosome"/>
</dbReference>
<dbReference type="GO" id="GO:0047198">
    <property type="term" value="F:L-cysteine-S-conjugate N-acetyltransferase activity"/>
    <property type="evidence" value="ECO:0007669"/>
    <property type="project" value="RHEA"/>
</dbReference>
<dbReference type="CDD" id="cd04301">
    <property type="entry name" value="NAT_SF"/>
    <property type="match status" value="1"/>
</dbReference>
<dbReference type="Gene3D" id="3.40.630.30">
    <property type="match status" value="1"/>
</dbReference>
<dbReference type="InterPro" id="IPR016181">
    <property type="entry name" value="Acyl_CoA_acyltransferase"/>
</dbReference>
<dbReference type="InterPro" id="IPR000182">
    <property type="entry name" value="GNAT_dom"/>
</dbReference>
<dbReference type="Pfam" id="PF00583">
    <property type="entry name" value="Acetyltransf_1"/>
    <property type="match status" value="1"/>
</dbReference>
<dbReference type="SUPFAM" id="SSF55729">
    <property type="entry name" value="Acyl-CoA N-acyltransferases (Nat)"/>
    <property type="match status" value="1"/>
</dbReference>
<dbReference type="PROSITE" id="PS51186">
    <property type="entry name" value="GNAT"/>
    <property type="match status" value="1"/>
</dbReference>
<organism>
    <name type="scientific">Bacillus subtilis (strain 168)</name>
    <dbReference type="NCBI Taxonomy" id="224308"/>
    <lineage>
        <taxon>Bacteria</taxon>
        <taxon>Bacillati</taxon>
        <taxon>Bacillota</taxon>
        <taxon>Bacilli</taxon>
        <taxon>Bacillales</taxon>
        <taxon>Bacillaceae</taxon>
        <taxon>Bacillus</taxon>
    </lineage>
</organism>
<gene>
    <name evidence="5" type="primary">snaA</name>
    <name type="synonym">ytmI</name>
    <name type="ordered locus">BSU29390</name>
</gene>
<evidence type="ECO:0000255" key="1">
    <source>
        <dbReference type="PROSITE-ProRule" id="PRU00532"/>
    </source>
</evidence>
<evidence type="ECO:0000269" key="2">
    <source>
    </source>
</evidence>
<evidence type="ECO:0000269" key="3">
    <source>
    </source>
</evidence>
<evidence type="ECO:0000269" key="4">
    <source>
    </source>
</evidence>
<evidence type="ECO:0000303" key="5">
    <source>
    </source>
</evidence>
<evidence type="ECO:0000305" key="6"/>
<evidence type="ECO:0000305" key="7">
    <source>
    </source>
</evidence>
<protein>
    <recommendedName>
        <fullName evidence="5">S-alkylcysteine N-acetyltransferase</fullName>
        <ecNumber evidence="4">2.3.1.80</ecNumber>
    </recommendedName>
</protein>
<sequence length="178" mass="20468">MSDDIFRLATVEDASELLKLVNSAFQPIRQLDIDWPSTRADIQMVSENIEHHSAIVLERDGKLISTITIRFPWESETPPSKYPFVWWFATLPEYKGQGAGSKLLTYVEEKVLRDMLKAPALTLGTSARKHPWLADMYRRRGYEVYFEQEKDGDIGVMMHKVLIPERFNPTLLGAPSWA</sequence>
<feature type="chain" id="PRO_0000360505" description="S-alkylcysteine N-acetyltransferase">
    <location>
        <begin position="1"/>
        <end position="178"/>
    </location>
</feature>
<feature type="domain" description="N-acetyltransferase" evidence="1">
    <location>
        <begin position="4"/>
        <end position="163"/>
    </location>
</feature>
<name>SNAA_BACSU</name>